<feature type="chain" id="PRO_0000411880" description="Probable Xaa-Pro aminopeptidase PEPP">
    <location>
        <begin position="1"/>
        <end position="468"/>
    </location>
</feature>
<feature type="binding site" evidence="1">
    <location>
        <position position="264"/>
    </location>
    <ligand>
        <name>Mn(2+)</name>
        <dbReference type="ChEBI" id="CHEBI:29035"/>
        <label>2</label>
    </ligand>
</feature>
<feature type="binding site" evidence="1">
    <location>
        <position position="275"/>
    </location>
    <ligand>
        <name>Mn(2+)</name>
        <dbReference type="ChEBI" id="CHEBI:29035"/>
        <label>1</label>
    </ligand>
</feature>
<feature type="binding site" evidence="1">
    <location>
        <position position="275"/>
    </location>
    <ligand>
        <name>Mn(2+)</name>
        <dbReference type="ChEBI" id="CHEBI:29035"/>
        <label>2</label>
    </ligand>
</feature>
<feature type="binding site" evidence="1">
    <location>
        <position position="398"/>
    </location>
    <ligand>
        <name>Mn(2+)</name>
        <dbReference type="ChEBI" id="CHEBI:29035"/>
        <label>1</label>
    </ligand>
</feature>
<feature type="binding site" evidence="1">
    <location>
        <position position="438"/>
    </location>
    <ligand>
        <name>Mn(2+)</name>
        <dbReference type="ChEBI" id="CHEBI:29035"/>
        <label>1</label>
    </ligand>
</feature>
<feature type="binding site" evidence="1">
    <location>
        <position position="438"/>
    </location>
    <ligand>
        <name>Mn(2+)</name>
        <dbReference type="ChEBI" id="CHEBI:29035"/>
        <label>2</label>
    </ligand>
</feature>
<reference key="1">
    <citation type="journal article" date="2011" name="PLoS Genet.">
        <title>Comparative genomic analysis of human fungal pathogens causing paracoccidioidomycosis.</title>
        <authorList>
            <person name="Desjardins C.A."/>
            <person name="Champion M.D."/>
            <person name="Holder J.W."/>
            <person name="Muszewska A."/>
            <person name="Goldberg J."/>
            <person name="Bailao A.M."/>
            <person name="Brigido M.M."/>
            <person name="Ferreira M.E."/>
            <person name="Garcia A.M."/>
            <person name="Grynberg M."/>
            <person name="Gujja S."/>
            <person name="Heiman D.I."/>
            <person name="Henn M.R."/>
            <person name="Kodira C.D."/>
            <person name="Leon-Narvaez H."/>
            <person name="Longo L.V.G."/>
            <person name="Ma L.-J."/>
            <person name="Malavazi I."/>
            <person name="Matsuo A.L."/>
            <person name="Morais F.V."/>
            <person name="Pereira M."/>
            <person name="Rodriguez-Brito S."/>
            <person name="Sakthikumar S."/>
            <person name="Salem-Izacc S.M."/>
            <person name="Sykes S.M."/>
            <person name="Teixeira M.M."/>
            <person name="Vallejo M.C."/>
            <person name="Walter M.E."/>
            <person name="Yandava C."/>
            <person name="Young S."/>
            <person name="Zeng Q."/>
            <person name="Zucker J."/>
            <person name="Felipe M.S."/>
            <person name="Goldman G.H."/>
            <person name="Haas B.J."/>
            <person name="McEwen J.G."/>
            <person name="Nino-Vega G."/>
            <person name="Puccia R."/>
            <person name="San-Blas G."/>
            <person name="Soares C.M."/>
            <person name="Birren B.W."/>
            <person name="Cuomo C.A."/>
        </authorList>
    </citation>
    <scope>NUCLEOTIDE SEQUENCE [LARGE SCALE GENOMIC DNA]</scope>
    <source>
        <strain>Pb18</strain>
    </source>
</reference>
<accession>C1GD57</accession>
<name>AMPP3_PARBD</name>
<organism>
    <name type="scientific">Paracoccidioides brasiliensis (strain Pb18)</name>
    <dbReference type="NCBI Taxonomy" id="502780"/>
    <lineage>
        <taxon>Eukaryota</taxon>
        <taxon>Fungi</taxon>
        <taxon>Dikarya</taxon>
        <taxon>Ascomycota</taxon>
        <taxon>Pezizomycotina</taxon>
        <taxon>Eurotiomycetes</taxon>
        <taxon>Eurotiomycetidae</taxon>
        <taxon>Onygenales</taxon>
        <taxon>Ajellomycetaceae</taxon>
        <taxon>Paracoccidioides</taxon>
    </lineage>
</organism>
<sequence length="468" mass="51900">MAISVDQTPAGKYPAKVHAKRVAARIQELGHGDSGIIYLEGQKTHMIEDSDGEMPFRQRRNFFYLSGCPLPDSYLTYDIKADKLTIFIPPIDPASVIWSGLPLSVEEALEIYDVDAVLSTAEVNASLAHYCSAQGGKKVFAIADQVSPHITFLPFQEIDFDVLKRAVEESRVVKDSYEIALLRRANEISSKAHVAVFKAATSARNERELEAIFVGACMSSGCREQSYHPIFASGTNAATLHYQKNDEDLVDSVTGQRRLNMLIDAGAEYRNYCADITRVVPLSGKFSPESREIYDIVLEMQNSSLAMIKAGVMWEDVHSTSHRVAIRGLLKLGILRSTEEELFEKGISVAFFPHGLGHYLGMDTHDTGGNPNYADKDPKFKYLRLRGPLASGGVVTVEPGIYFCRFIIDPYLSSPDLGKYINADVLERYWSVGGVRIEDNVVVTDSGYDNLTTAPKLPEEIERLATEK</sequence>
<protein>
    <recommendedName>
        <fullName>Probable Xaa-Pro aminopeptidase PEPP</fullName>
        <ecNumber>3.4.11.9</ecNumber>
    </recommendedName>
    <alternativeName>
        <fullName>Aminoacylproline aminopeptidase</fullName>
    </alternativeName>
    <alternativeName>
        <fullName>Prolidase</fullName>
    </alternativeName>
</protein>
<gene>
    <name type="primary">PEPP</name>
    <name type="ORF">PADG_05193</name>
</gene>
<evidence type="ECO:0000250" key="1"/>
<evidence type="ECO:0000305" key="2"/>
<proteinExistence type="inferred from homology"/>
<comment type="function">
    <text evidence="1">Catalyzes the removal of a penultimate prolyl residue from the N-termini of peptides.</text>
</comment>
<comment type="catalytic activity">
    <reaction>
        <text>Release of any N-terminal amino acid, including proline, that is linked to proline, even from a dipeptide or tripeptide.</text>
        <dbReference type="EC" id="3.4.11.9"/>
    </reaction>
</comment>
<comment type="cofactor">
    <cofactor evidence="1">
        <name>Mn(2+)</name>
        <dbReference type="ChEBI" id="CHEBI:29035"/>
    </cofactor>
    <text evidence="1">Binds 2 manganese ions per subunit.</text>
</comment>
<comment type="similarity">
    <text evidence="2">Belongs to the peptidase M24B family.</text>
</comment>
<keyword id="KW-0031">Aminopeptidase</keyword>
<keyword id="KW-0378">Hydrolase</keyword>
<keyword id="KW-0464">Manganese</keyword>
<keyword id="KW-0479">Metal-binding</keyword>
<keyword id="KW-0482">Metalloprotease</keyword>
<keyword id="KW-0645">Protease</keyword>
<keyword id="KW-1185">Reference proteome</keyword>
<dbReference type="EC" id="3.4.11.9"/>
<dbReference type="EMBL" id="KN275962">
    <property type="protein sequence ID" value="EEH49114.1"/>
    <property type="molecule type" value="Genomic_DNA"/>
</dbReference>
<dbReference type="RefSeq" id="XP_010760915.1">
    <property type="nucleotide sequence ID" value="XM_010762613.1"/>
</dbReference>
<dbReference type="SMR" id="C1GD57"/>
<dbReference type="FunCoup" id="C1GD57">
    <property type="interactions" value="377"/>
</dbReference>
<dbReference type="STRING" id="502780.C1GD57"/>
<dbReference type="GeneID" id="22584169"/>
<dbReference type="KEGG" id="pbn:PADG_05193"/>
<dbReference type="VEuPathDB" id="FungiDB:PADG_05193"/>
<dbReference type="eggNOG" id="KOG2737">
    <property type="taxonomic scope" value="Eukaryota"/>
</dbReference>
<dbReference type="HOGENOM" id="CLU_017266_1_2_1"/>
<dbReference type="InParanoid" id="C1GD57"/>
<dbReference type="OMA" id="DAHALFF"/>
<dbReference type="OrthoDB" id="9302at33183"/>
<dbReference type="Proteomes" id="UP000001628">
    <property type="component" value="Unassembled WGS sequence"/>
</dbReference>
<dbReference type="GO" id="GO:0030145">
    <property type="term" value="F:manganese ion binding"/>
    <property type="evidence" value="ECO:0007669"/>
    <property type="project" value="InterPro"/>
</dbReference>
<dbReference type="GO" id="GO:0070006">
    <property type="term" value="F:metalloaminopeptidase activity"/>
    <property type="evidence" value="ECO:0007669"/>
    <property type="project" value="InterPro"/>
</dbReference>
<dbReference type="GO" id="GO:0006508">
    <property type="term" value="P:proteolysis"/>
    <property type="evidence" value="ECO:0007669"/>
    <property type="project" value="UniProtKB-KW"/>
</dbReference>
<dbReference type="CDD" id="cd01087">
    <property type="entry name" value="Prolidase"/>
    <property type="match status" value="1"/>
</dbReference>
<dbReference type="FunFam" id="3.90.230.10:FF:000002">
    <property type="entry name" value="Xaa-Pro aminopeptidase 3"/>
    <property type="match status" value="1"/>
</dbReference>
<dbReference type="Gene3D" id="3.90.230.10">
    <property type="entry name" value="Creatinase/methionine aminopeptidase superfamily"/>
    <property type="match status" value="1"/>
</dbReference>
<dbReference type="Gene3D" id="3.40.350.10">
    <property type="entry name" value="Creatinase/prolidase N-terminal domain"/>
    <property type="match status" value="1"/>
</dbReference>
<dbReference type="InterPro" id="IPR007865">
    <property type="entry name" value="Aminopep_P_N"/>
</dbReference>
<dbReference type="InterPro" id="IPR029149">
    <property type="entry name" value="Creatin/AminoP/Spt16_N"/>
</dbReference>
<dbReference type="InterPro" id="IPR036005">
    <property type="entry name" value="Creatinase/aminopeptidase-like"/>
</dbReference>
<dbReference type="InterPro" id="IPR000994">
    <property type="entry name" value="Pept_M24"/>
</dbReference>
<dbReference type="InterPro" id="IPR052433">
    <property type="entry name" value="X-Pro_dipept-like"/>
</dbReference>
<dbReference type="PANTHER" id="PTHR43226">
    <property type="entry name" value="XAA-PRO AMINOPEPTIDASE 3"/>
    <property type="match status" value="1"/>
</dbReference>
<dbReference type="PANTHER" id="PTHR43226:SF1">
    <property type="entry name" value="XAA-PRO DIPEPTIDASE"/>
    <property type="match status" value="1"/>
</dbReference>
<dbReference type="Pfam" id="PF05195">
    <property type="entry name" value="AMP_N"/>
    <property type="match status" value="1"/>
</dbReference>
<dbReference type="Pfam" id="PF00557">
    <property type="entry name" value="Peptidase_M24"/>
    <property type="match status" value="1"/>
</dbReference>
<dbReference type="SMART" id="SM01011">
    <property type="entry name" value="AMP_N"/>
    <property type="match status" value="1"/>
</dbReference>
<dbReference type="SUPFAM" id="SSF55920">
    <property type="entry name" value="Creatinase/aminopeptidase"/>
    <property type="match status" value="1"/>
</dbReference>
<dbReference type="SUPFAM" id="SSF53092">
    <property type="entry name" value="Creatinase/prolidase N-terminal domain"/>
    <property type="match status" value="1"/>
</dbReference>